<keyword id="KW-0436">Ligase</keyword>
<name>CAIC_SALPC</name>
<evidence type="ECO:0000255" key="1">
    <source>
        <dbReference type="HAMAP-Rule" id="MF_01524"/>
    </source>
</evidence>
<organism>
    <name type="scientific">Salmonella paratyphi C (strain RKS4594)</name>
    <dbReference type="NCBI Taxonomy" id="476213"/>
    <lineage>
        <taxon>Bacteria</taxon>
        <taxon>Pseudomonadati</taxon>
        <taxon>Pseudomonadota</taxon>
        <taxon>Gammaproteobacteria</taxon>
        <taxon>Enterobacterales</taxon>
        <taxon>Enterobacteriaceae</taxon>
        <taxon>Salmonella</taxon>
    </lineage>
</organism>
<feature type="chain" id="PRO_1000185130" description="Crotonobetaine/carnitine--CoA ligase">
    <location>
        <begin position="1"/>
        <end position="517"/>
    </location>
</feature>
<dbReference type="EC" id="6.2.1.48" evidence="1"/>
<dbReference type="EMBL" id="CP000857">
    <property type="protein sequence ID" value="ACN44268.1"/>
    <property type="molecule type" value="Genomic_DNA"/>
</dbReference>
<dbReference type="RefSeq" id="WP_000355814.1">
    <property type="nucleotide sequence ID" value="NC_012125.1"/>
</dbReference>
<dbReference type="SMR" id="C0Q4L3"/>
<dbReference type="KEGG" id="sei:SPC_0076"/>
<dbReference type="HOGENOM" id="CLU_000022_59_0_6"/>
<dbReference type="UniPathway" id="UPA00117"/>
<dbReference type="Proteomes" id="UP000001599">
    <property type="component" value="Chromosome"/>
</dbReference>
<dbReference type="GO" id="GO:0051108">
    <property type="term" value="F:carnitine-CoA ligase activity"/>
    <property type="evidence" value="ECO:0007669"/>
    <property type="project" value="InterPro"/>
</dbReference>
<dbReference type="GO" id="GO:0051109">
    <property type="term" value="F:crotonobetaine-CoA ligase activity"/>
    <property type="evidence" value="ECO:0007669"/>
    <property type="project" value="InterPro"/>
</dbReference>
<dbReference type="GO" id="GO:0031956">
    <property type="term" value="F:medium-chain fatty acid-CoA ligase activity"/>
    <property type="evidence" value="ECO:0007669"/>
    <property type="project" value="TreeGrafter"/>
</dbReference>
<dbReference type="GO" id="GO:0009437">
    <property type="term" value="P:carnitine metabolic process"/>
    <property type="evidence" value="ECO:0007669"/>
    <property type="project" value="UniProtKB-UniRule"/>
</dbReference>
<dbReference type="GO" id="GO:0006631">
    <property type="term" value="P:fatty acid metabolic process"/>
    <property type="evidence" value="ECO:0007669"/>
    <property type="project" value="TreeGrafter"/>
</dbReference>
<dbReference type="CDD" id="cd05934">
    <property type="entry name" value="FACL_DitJ_like"/>
    <property type="match status" value="1"/>
</dbReference>
<dbReference type="FunFam" id="3.30.300.30:FF:000011">
    <property type="entry name" value="Crotonobetaine/carnitine--CoA ligase"/>
    <property type="match status" value="1"/>
</dbReference>
<dbReference type="Gene3D" id="3.30.300.30">
    <property type="match status" value="1"/>
</dbReference>
<dbReference type="Gene3D" id="3.40.50.12780">
    <property type="entry name" value="N-terminal domain of ligase-like"/>
    <property type="match status" value="1"/>
</dbReference>
<dbReference type="HAMAP" id="MF_01524">
    <property type="entry name" value="CaiC"/>
    <property type="match status" value="1"/>
</dbReference>
<dbReference type="InterPro" id="IPR025110">
    <property type="entry name" value="AMP-bd_C"/>
</dbReference>
<dbReference type="InterPro" id="IPR045851">
    <property type="entry name" value="AMP-bd_C_sf"/>
</dbReference>
<dbReference type="InterPro" id="IPR020845">
    <property type="entry name" value="AMP-binding_CS"/>
</dbReference>
<dbReference type="InterPro" id="IPR000873">
    <property type="entry name" value="AMP-dep_synth/lig_dom"/>
</dbReference>
<dbReference type="InterPro" id="IPR042099">
    <property type="entry name" value="ANL_N_sf"/>
</dbReference>
<dbReference type="InterPro" id="IPR023456">
    <property type="entry name" value="CaiC"/>
</dbReference>
<dbReference type="NCBIfam" id="NF005947">
    <property type="entry name" value="PRK08008.1"/>
    <property type="match status" value="1"/>
</dbReference>
<dbReference type="PANTHER" id="PTHR43201">
    <property type="entry name" value="ACYL-COA SYNTHETASE"/>
    <property type="match status" value="1"/>
</dbReference>
<dbReference type="PANTHER" id="PTHR43201:SF5">
    <property type="entry name" value="MEDIUM-CHAIN ACYL-COA LIGASE ACSF2, MITOCHONDRIAL"/>
    <property type="match status" value="1"/>
</dbReference>
<dbReference type="Pfam" id="PF00501">
    <property type="entry name" value="AMP-binding"/>
    <property type="match status" value="1"/>
</dbReference>
<dbReference type="Pfam" id="PF13193">
    <property type="entry name" value="AMP-binding_C"/>
    <property type="match status" value="1"/>
</dbReference>
<dbReference type="SUPFAM" id="SSF56801">
    <property type="entry name" value="Acetyl-CoA synthetase-like"/>
    <property type="match status" value="1"/>
</dbReference>
<dbReference type="PROSITE" id="PS00455">
    <property type="entry name" value="AMP_BINDING"/>
    <property type="match status" value="1"/>
</dbReference>
<gene>
    <name evidence="1" type="primary">caiC</name>
    <name type="ordered locus">SPC_0076</name>
</gene>
<accession>C0Q4L3</accession>
<proteinExistence type="inferred from homology"/>
<protein>
    <recommendedName>
        <fullName evidence="1">Crotonobetaine/carnitine--CoA ligase</fullName>
        <ecNumber evidence="1">6.2.1.48</ecNumber>
    </recommendedName>
</protein>
<comment type="function">
    <text evidence="1">Catalyzes the transfer of CoA to carnitine, generating the initial carnitinyl-CoA needed for the CaiB reaction cycle. Also has activity toward crotonobetaine and gamma-butyrobetaine.</text>
</comment>
<comment type="catalytic activity">
    <reaction evidence="1">
        <text>4-(trimethylamino)butanoate + ATP + CoA = 4-(trimethylamino)butanoyl-CoA + AMP + diphosphate</text>
        <dbReference type="Rhea" id="RHEA:55960"/>
        <dbReference type="ChEBI" id="CHEBI:16244"/>
        <dbReference type="ChEBI" id="CHEBI:30616"/>
        <dbReference type="ChEBI" id="CHEBI:33019"/>
        <dbReference type="ChEBI" id="CHEBI:57287"/>
        <dbReference type="ChEBI" id="CHEBI:61513"/>
        <dbReference type="ChEBI" id="CHEBI:456215"/>
        <dbReference type="EC" id="6.2.1.48"/>
    </reaction>
</comment>
<comment type="catalytic activity">
    <reaction evidence="1">
        <text>crotonobetaine + ATP + CoA = crotonobetainyl-CoA + AMP + diphosphate</text>
        <dbReference type="Rhea" id="RHEA:30079"/>
        <dbReference type="ChEBI" id="CHEBI:17237"/>
        <dbReference type="ChEBI" id="CHEBI:30616"/>
        <dbReference type="ChEBI" id="CHEBI:33019"/>
        <dbReference type="ChEBI" id="CHEBI:57287"/>
        <dbReference type="ChEBI" id="CHEBI:60933"/>
        <dbReference type="ChEBI" id="CHEBI:456215"/>
        <dbReference type="EC" id="6.2.1.48"/>
    </reaction>
</comment>
<comment type="catalytic activity">
    <reaction evidence="1">
        <text>(R)-carnitine + ATP + CoA = (R)-carnitinyl-CoA + AMP + diphosphate</text>
        <dbReference type="Rhea" id="RHEA:28514"/>
        <dbReference type="ChEBI" id="CHEBI:16347"/>
        <dbReference type="ChEBI" id="CHEBI:30616"/>
        <dbReference type="ChEBI" id="CHEBI:33019"/>
        <dbReference type="ChEBI" id="CHEBI:57287"/>
        <dbReference type="ChEBI" id="CHEBI:60932"/>
        <dbReference type="ChEBI" id="CHEBI:456215"/>
        <dbReference type="EC" id="6.2.1.48"/>
    </reaction>
</comment>
<comment type="pathway">
    <text evidence="1">Amine and polyamine metabolism; carnitine metabolism.</text>
</comment>
<comment type="similarity">
    <text evidence="1">Belongs to the ATP-dependent AMP-binding enzyme family.</text>
</comment>
<reference key="1">
    <citation type="journal article" date="2009" name="PLoS ONE">
        <title>Salmonella paratyphi C: genetic divergence from Salmonella choleraesuis and pathogenic convergence with Salmonella typhi.</title>
        <authorList>
            <person name="Liu W.-Q."/>
            <person name="Feng Y."/>
            <person name="Wang Y."/>
            <person name="Zou Q.-H."/>
            <person name="Chen F."/>
            <person name="Guo J.-T."/>
            <person name="Peng Y.-H."/>
            <person name="Jin Y."/>
            <person name="Li Y.-G."/>
            <person name="Hu S.-N."/>
            <person name="Johnston R.N."/>
            <person name="Liu G.-R."/>
            <person name="Liu S.-L."/>
        </authorList>
    </citation>
    <scope>NUCLEOTIDE SEQUENCE [LARGE SCALE GENOMIC DNA]</scope>
    <source>
        <strain>RKS4594</strain>
    </source>
</reference>
<sequence>MDIVGGQNLRQMWDDLAGVYGDKTALIFESCEGIVRQFSYASLNEEINRTANLFYSLGIRKGDRVALHLDNCPEFIFCWFGLAKIGAIMVPINARLLGEESAWILQNSQVSLLVTSVQFYPMYREIHQDNSTPLNHICLIGEQLPADDGVSHFSQLQARQSATLCYTPALSTDDTAEILFTSGTTSRPKGVVITHYNLRFAGYYSAWQIALRDDDVYMTVMPAFHIDCQCTAAMPAFSAGSTFVLLEKYSARAFWDQVRRYQATVTECIPMMIRTLMVQPAAPTDRQHHLREVMFYLNLSAQEKDAFTERFGVRLLTSYGMTETIVGIIGDRPGDKRRWPSIGRVGFSYEAEIRDDQNRPLPAGEIGEICIKGIPGKTIFKEYYMQPEATAGALEPEGWLHTGDSGYQDEDGYFYFVDRRCNMIKRGGENVSCVELENIISAHPKIQDIVVVGIKDAIRDEAIKAFIVLNEGETLSEAEFFSFCENNMAKFKVPSFMEIRTDLPRNCSGKIIKKNLK</sequence>